<accession>Q886V1</accession>
<comment type="function">
    <text evidence="1">An accessory protein needed during the final step in the assembly of 30S ribosomal subunit, possibly for assembly of the head region. Essential for efficient processing of 16S rRNA. May be needed both before and after RbfA during the maturation of 16S rRNA. It has affinity for free ribosomal 30S subunits but not for 70S ribosomes.</text>
</comment>
<comment type="subunit">
    <text evidence="1">Binds ribosomal protein uS19.</text>
</comment>
<comment type="subcellular location">
    <subcellularLocation>
        <location evidence="1">Cytoplasm</location>
    </subcellularLocation>
</comment>
<comment type="domain">
    <text evidence="1">The PRC barrel domain binds ribosomal protein uS19.</text>
</comment>
<comment type="similarity">
    <text evidence="1">Belongs to the RimM family.</text>
</comment>
<organism>
    <name type="scientific">Pseudomonas syringae pv. tomato (strain ATCC BAA-871 / DC3000)</name>
    <dbReference type="NCBI Taxonomy" id="223283"/>
    <lineage>
        <taxon>Bacteria</taxon>
        <taxon>Pseudomonadati</taxon>
        <taxon>Pseudomonadota</taxon>
        <taxon>Gammaproteobacteria</taxon>
        <taxon>Pseudomonadales</taxon>
        <taxon>Pseudomonadaceae</taxon>
        <taxon>Pseudomonas</taxon>
    </lineage>
</organism>
<keyword id="KW-0143">Chaperone</keyword>
<keyword id="KW-0963">Cytoplasm</keyword>
<keyword id="KW-1185">Reference proteome</keyword>
<keyword id="KW-0690">Ribosome biogenesis</keyword>
<keyword id="KW-0698">rRNA processing</keyword>
<name>RIMM_PSESM</name>
<sequence>MNATPASADDLIVIGKIYSVHGVRGEVKVYSFTDPIGNLLDYKTWTLRREGSVEKQVELVSGRLQSKFLVVKLKGLDDREEARLLSGYEICVPRNLFPDLDDGEYYWYQLEGLKVIDQLGQLLGKIDHLLETGSNDVMVVKPCAGSLDDRERLLPYTEQCVLAIDMAAGEMKVEWDADF</sequence>
<gene>
    <name evidence="1" type="primary">rimM</name>
    <name type="ordered locus">PSPTO_1474</name>
</gene>
<feature type="chain" id="PRO_0000163337" description="Ribosome maturation factor RimM">
    <location>
        <begin position="1"/>
        <end position="179"/>
    </location>
</feature>
<feature type="domain" description="PRC barrel" evidence="1">
    <location>
        <begin position="102"/>
        <end position="179"/>
    </location>
</feature>
<proteinExistence type="inferred from homology"/>
<evidence type="ECO:0000255" key="1">
    <source>
        <dbReference type="HAMAP-Rule" id="MF_00014"/>
    </source>
</evidence>
<reference key="1">
    <citation type="journal article" date="2003" name="Proc. Natl. Acad. Sci. U.S.A.">
        <title>The complete genome sequence of the Arabidopsis and tomato pathogen Pseudomonas syringae pv. tomato DC3000.</title>
        <authorList>
            <person name="Buell C.R."/>
            <person name="Joardar V."/>
            <person name="Lindeberg M."/>
            <person name="Selengut J."/>
            <person name="Paulsen I.T."/>
            <person name="Gwinn M.L."/>
            <person name="Dodson R.J."/>
            <person name="DeBoy R.T."/>
            <person name="Durkin A.S."/>
            <person name="Kolonay J.F."/>
            <person name="Madupu R."/>
            <person name="Daugherty S.C."/>
            <person name="Brinkac L.M."/>
            <person name="Beanan M.J."/>
            <person name="Haft D.H."/>
            <person name="Nelson W.C."/>
            <person name="Davidsen T.M."/>
            <person name="Zafar N."/>
            <person name="Zhou L."/>
            <person name="Liu J."/>
            <person name="Yuan Q."/>
            <person name="Khouri H.M."/>
            <person name="Fedorova N.B."/>
            <person name="Tran B."/>
            <person name="Russell D."/>
            <person name="Berry K.J."/>
            <person name="Utterback T.R."/>
            <person name="Van Aken S.E."/>
            <person name="Feldblyum T.V."/>
            <person name="D'Ascenzo M."/>
            <person name="Deng W.-L."/>
            <person name="Ramos A.R."/>
            <person name="Alfano J.R."/>
            <person name="Cartinhour S."/>
            <person name="Chatterjee A.K."/>
            <person name="Delaney T.P."/>
            <person name="Lazarowitz S.G."/>
            <person name="Martin G.B."/>
            <person name="Schneider D.J."/>
            <person name="Tang X."/>
            <person name="Bender C.L."/>
            <person name="White O."/>
            <person name="Fraser C.M."/>
            <person name="Collmer A."/>
        </authorList>
    </citation>
    <scope>NUCLEOTIDE SEQUENCE [LARGE SCALE GENOMIC DNA]</scope>
    <source>
        <strain>ATCC BAA-871 / DC3000</strain>
    </source>
</reference>
<dbReference type="EMBL" id="AE016853">
    <property type="protein sequence ID" value="AAO54995.1"/>
    <property type="molecule type" value="Genomic_DNA"/>
</dbReference>
<dbReference type="RefSeq" id="NP_791300.1">
    <property type="nucleotide sequence ID" value="NC_004578.1"/>
</dbReference>
<dbReference type="RefSeq" id="WP_005765872.1">
    <property type="nucleotide sequence ID" value="NC_004578.1"/>
</dbReference>
<dbReference type="SMR" id="Q886V1"/>
<dbReference type="STRING" id="223283.PSPTO_1474"/>
<dbReference type="GeneID" id="1183111"/>
<dbReference type="KEGG" id="pst:PSPTO_1474"/>
<dbReference type="PATRIC" id="fig|223283.9.peg.1495"/>
<dbReference type="eggNOG" id="COG0806">
    <property type="taxonomic scope" value="Bacteria"/>
</dbReference>
<dbReference type="HOGENOM" id="CLU_077636_1_0_6"/>
<dbReference type="OrthoDB" id="9783509at2"/>
<dbReference type="PhylomeDB" id="Q886V1"/>
<dbReference type="Proteomes" id="UP000002515">
    <property type="component" value="Chromosome"/>
</dbReference>
<dbReference type="GO" id="GO:0005737">
    <property type="term" value="C:cytoplasm"/>
    <property type="evidence" value="ECO:0007669"/>
    <property type="project" value="UniProtKB-SubCell"/>
</dbReference>
<dbReference type="GO" id="GO:0005840">
    <property type="term" value="C:ribosome"/>
    <property type="evidence" value="ECO:0007669"/>
    <property type="project" value="InterPro"/>
</dbReference>
<dbReference type="GO" id="GO:0043022">
    <property type="term" value="F:ribosome binding"/>
    <property type="evidence" value="ECO:0007669"/>
    <property type="project" value="InterPro"/>
</dbReference>
<dbReference type="GO" id="GO:0042274">
    <property type="term" value="P:ribosomal small subunit biogenesis"/>
    <property type="evidence" value="ECO:0007669"/>
    <property type="project" value="UniProtKB-UniRule"/>
</dbReference>
<dbReference type="GO" id="GO:0006364">
    <property type="term" value="P:rRNA processing"/>
    <property type="evidence" value="ECO:0007669"/>
    <property type="project" value="UniProtKB-UniRule"/>
</dbReference>
<dbReference type="Gene3D" id="2.30.30.240">
    <property type="entry name" value="PRC-barrel domain"/>
    <property type="match status" value="1"/>
</dbReference>
<dbReference type="Gene3D" id="2.40.30.60">
    <property type="entry name" value="RimM"/>
    <property type="match status" value="1"/>
</dbReference>
<dbReference type="HAMAP" id="MF_00014">
    <property type="entry name" value="Ribosome_mat_RimM"/>
    <property type="match status" value="1"/>
</dbReference>
<dbReference type="InterPro" id="IPR011033">
    <property type="entry name" value="PRC_barrel-like_sf"/>
</dbReference>
<dbReference type="InterPro" id="IPR056792">
    <property type="entry name" value="PRC_RimM"/>
</dbReference>
<dbReference type="InterPro" id="IPR011961">
    <property type="entry name" value="RimM"/>
</dbReference>
<dbReference type="InterPro" id="IPR002676">
    <property type="entry name" value="RimM_N"/>
</dbReference>
<dbReference type="InterPro" id="IPR036976">
    <property type="entry name" value="RimM_N_sf"/>
</dbReference>
<dbReference type="InterPro" id="IPR009000">
    <property type="entry name" value="Transl_B-barrel_sf"/>
</dbReference>
<dbReference type="NCBIfam" id="TIGR02273">
    <property type="entry name" value="16S_RimM"/>
    <property type="match status" value="1"/>
</dbReference>
<dbReference type="PANTHER" id="PTHR33692">
    <property type="entry name" value="RIBOSOME MATURATION FACTOR RIMM"/>
    <property type="match status" value="1"/>
</dbReference>
<dbReference type="PANTHER" id="PTHR33692:SF1">
    <property type="entry name" value="RIBOSOME MATURATION FACTOR RIMM"/>
    <property type="match status" value="1"/>
</dbReference>
<dbReference type="Pfam" id="PF24986">
    <property type="entry name" value="PRC_RimM"/>
    <property type="match status" value="1"/>
</dbReference>
<dbReference type="Pfam" id="PF01782">
    <property type="entry name" value="RimM"/>
    <property type="match status" value="1"/>
</dbReference>
<dbReference type="SUPFAM" id="SSF50346">
    <property type="entry name" value="PRC-barrel domain"/>
    <property type="match status" value="1"/>
</dbReference>
<dbReference type="SUPFAM" id="SSF50447">
    <property type="entry name" value="Translation proteins"/>
    <property type="match status" value="1"/>
</dbReference>
<protein>
    <recommendedName>
        <fullName evidence="1">Ribosome maturation factor RimM</fullName>
    </recommendedName>
</protein>